<accession>C0HK69</accession>
<sequence length="68" mass="8041">KEGYLVDYHTGCKYTCAKLGDNDYCVRECRLRYYQSAHGYCYAFACWCTHLYEQAVVWPLPNKRCKGK</sequence>
<protein>
    <recommendedName>
        <fullName evidence="5 7">Beta-toxin Cl13</fullName>
    </recommendedName>
    <alternativeName>
        <fullName evidence="6">CliNaTxBet37</fullName>
    </alternativeName>
</protein>
<evidence type="ECO:0000250" key="1">
    <source>
        <dbReference type="UniProtKB" id="P60266"/>
    </source>
</evidence>
<evidence type="ECO:0000255" key="2">
    <source>
        <dbReference type="PROSITE-ProRule" id="PRU01210"/>
    </source>
</evidence>
<evidence type="ECO:0000269" key="3">
    <source>
    </source>
</evidence>
<evidence type="ECO:0000269" key="4">
    <source>
    </source>
</evidence>
<evidence type="ECO:0000303" key="5">
    <source>
    </source>
</evidence>
<evidence type="ECO:0000303" key="6">
    <source>
    </source>
</evidence>
<evidence type="ECO:0000303" key="7">
    <source>
    </source>
</evidence>
<evidence type="ECO:0000305" key="8"/>
<evidence type="ECO:0000305" key="9">
    <source>
    </source>
</evidence>
<evidence type="ECO:0007744" key="10">
    <source>
        <dbReference type="PDB" id="6VXW"/>
    </source>
</evidence>
<evidence type="ECO:0007829" key="11">
    <source>
        <dbReference type="PDB" id="6VXW"/>
    </source>
</evidence>
<comment type="function">
    <text evidence="1 3">Beta toxins bind voltage-independently at site-4 of sodium channels (Nav) and shift the voltage of activation toward more negative potentials thereby affecting sodium channel activation and promoting spontaneous and repetitive firing (By similarity). Inhibits sodium channels Nav1.4/SCN4A, Nav1.5/SCN5A and Nav1.6/SCN8A (PubMed:27871874). Also has a weak inhibitory effect on Nav1.2/SCN2A (PubMed:27871874). Is lethal to mice (PubMed:27871874).</text>
</comment>
<comment type="subcellular location">
    <subcellularLocation>
        <location evidence="3">Secreted</location>
    </subcellularLocation>
</comment>
<comment type="tissue specificity">
    <text evidence="9">Expressed by the venom gland.</text>
</comment>
<comment type="domain">
    <text evidence="4">Has the structural arrangement of an alpha-helix connected to antiparallel beta-sheets by disulfide bonds (CS-alpha/beta).</text>
</comment>
<comment type="mass spectrometry" mass="7846.6" method="Electrospray" evidence="3"/>
<comment type="toxic dose">
    <text evidence="3">Is lethal to mice by intraperitoneal injection of 0.5 ug (and higher doses).</text>
</comment>
<comment type="miscellaneous">
    <text evidence="3">Negative results: has no inhibitory effect on Nav1.1/SCN1A, Nav1.3/SCN3A and Nav1.7/SCN9A.</text>
</comment>
<comment type="miscellaneous">
    <text evidence="4">Is not neutralized by the two single-chain antibody fragments LR and 10FG2.</text>
</comment>
<comment type="similarity">
    <text evidence="8">Belongs to the long (4 C-C) scorpion toxin superfamily. Sodium channel inhibitor family. Beta subfamily.</text>
</comment>
<reference key="1">
    <citation type="journal article" date="2017" name="Peptides">
        <title>Functional and immuno-reactive characterization of a previously undescribed peptide from the venom of the scorpion Centruroides limpidus.</title>
        <authorList>
            <person name="Olamendi-Portugal T."/>
            <person name="Restano-Cassulini R."/>
            <person name="Riano-Umbarila L."/>
            <person name="Becerril B."/>
            <person name="Possani L.D."/>
        </authorList>
    </citation>
    <scope>PROTEIN SEQUENCE OF 1-66</scope>
    <scope>FUNCTION</scope>
    <scope>SUBCELLULAR LOCATION</scope>
    <scope>MASS SPECTROMETRY</scope>
    <scope>TOXIC DOSE</scope>
    <source>
        <tissue>Venom</tissue>
    </source>
</reference>
<reference key="2">
    <citation type="journal article" date="2019" name="Toxins">
        <title>Dissecting toxicity: the venom gland transcriptome and the venom proteome of the highly venomous scorpion Centruroides limpidus (Karsch, 1879).</title>
        <authorList>
            <person name="Cid-Uribe J.I."/>
            <person name="Meneses E.P."/>
            <person name="Batista C.V.F."/>
            <person name="Ortiz E."/>
            <person name="Possani L.D."/>
        </authorList>
    </citation>
    <scope>NUCLEOTIDE SEQUENCE [MRNA] OF 2-68</scope>
    <scope>IDENTIFICATION BY MASS SPECTROMETRY</scope>
    <source>
        <tissue>Venom</tissue>
        <tissue>Venom gland</tissue>
    </source>
</reference>
<reference key="3">
    <citation type="journal article" date="2020" name="Toxicon">
        <title>The three-dimensional structure of the toxic peptide Cl13 from the scorpion Centruroides limpidus.</title>
        <authorList>
            <person name="Lopez-Giraldo A.E."/>
            <person name="Olamendi-Portugal T."/>
            <person name="Riano-Umbarila L."/>
            <person name="Becerril B."/>
            <person name="Possani L.D."/>
            <person name="Delepierre M."/>
            <person name="Del Rio-Portilla F."/>
        </authorList>
    </citation>
    <scope>STRUCTURE BY NMR</scope>
    <scope>SEQUENCE REVISION TO 58 AND 66</scope>
    <scope>AMIDATION AT LYS-66</scope>
    <scope>DISULFIDE BONDS</scope>
    <source>
        <tissue>Venom</tissue>
    </source>
</reference>
<dbReference type="PDB" id="6VXW">
    <property type="method" value="NMR"/>
    <property type="chains" value="A=1-66"/>
</dbReference>
<dbReference type="PDBsum" id="6VXW"/>
<dbReference type="BMRB" id="C0HK69"/>
<dbReference type="SMR" id="C0HK69"/>
<dbReference type="ABCD" id="C0HK69">
    <property type="antibodies" value="3 sequenced antibodies"/>
</dbReference>
<dbReference type="GO" id="GO:0005576">
    <property type="term" value="C:extracellular region"/>
    <property type="evidence" value="ECO:0000314"/>
    <property type="project" value="UniProtKB"/>
</dbReference>
<dbReference type="GO" id="GO:0019871">
    <property type="term" value="F:sodium channel inhibitor activity"/>
    <property type="evidence" value="ECO:0000314"/>
    <property type="project" value="UniProtKB"/>
</dbReference>
<dbReference type="GO" id="GO:0090729">
    <property type="term" value="F:toxin activity"/>
    <property type="evidence" value="ECO:0007669"/>
    <property type="project" value="UniProtKB-KW"/>
</dbReference>
<dbReference type="GO" id="GO:0006952">
    <property type="term" value="P:defense response"/>
    <property type="evidence" value="ECO:0007669"/>
    <property type="project" value="InterPro"/>
</dbReference>
<dbReference type="CDD" id="cd23106">
    <property type="entry name" value="neurotoxins_LC_scorpion"/>
    <property type="match status" value="1"/>
</dbReference>
<dbReference type="FunFam" id="3.30.30.10:FF:000002">
    <property type="entry name" value="Alpha-like toxin BmK-M1"/>
    <property type="match status" value="1"/>
</dbReference>
<dbReference type="Gene3D" id="3.30.30.10">
    <property type="entry name" value="Knottin, scorpion toxin-like"/>
    <property type="match status" value="1"/>
</dbReference>
<dbReference type="InterPro" id="IPR044062">
    <property type="entry name" value="LCN-type_CS_alpha_beta_dom"/>
</dbReference>
<dbReference type="InterPro" id="IPR003614">
    <property type="entry name" value="Scorpion_toxin-like"/>
</dbReference>
<dbReference type="InterPro" id="IPR036574">
    <property type="entry name" value="Scorpion_toxin-like_sf"/>
</dbReference>
<dbReference type="InterPro" id="IPR018218">
    <property type="entry name" value="Scorpion_toxinL"/>
</dbReference>
<dbReference type="InterPro" id="IPR002061">
    <property type="entry name" value="Scorpion_toxinL/defensin"/>
</dbReference>
<dbReference type="Pfam" id="PF00537">
    <property type="entry name" value="Toxin_3"/>
    <property type="match status" value="1"/>
</dbReference>
<dbReference type="PRINTS" id="PR00285">
    <property type="entry name" value="SCORPNTOXIN"/>
</dbReference>
<dbReference type="SMART" id="SM00505">
    <property type="entry name" value="Knot1"/>
    <property type="match status" value="1"/>
</dbReference>
<dbReference type="SUPFAM" id="SSF57095">
    <property type="entry name" value="Scorpion toxin-like"/>
    <property type="match status" value="1"/>
</dbReference>
<dbReference type="PROSITE" id="PS51863">
    <property type="entry name" value="LCN_CSAB"/>
    <property type="match status" value="1"/>
</dbReference>
<proteinExistence type="evidence at protein level"/>
<keyword id="KW-0002">3D-structure</keyword>
<keyword id="KW-0027">Amidation</keyword>
<keyword id="KW-0903">Direct protein sequencing</keyword>
<keyword id="KW-1015">Disulfide bond</keyword>
<keyword id="KW-0872">Ion channel impairing toxin</keyword>
<keyword id="KW-0528">Neurotoxin</keyword>
<keyword id="KW-0964">Secreted</keyword>
<keyword id="KW-0800">Toxin</keyword>
<keyword id="KW-0738">Voltage-gated sodium channel impairing toxin</keyword>
<organism>
    <name type="scientific">Centruroides limpidus</name>
    <name type="common">Mexican scorpion</name>
    <dbReference type="NCBI Taxonomy" id="6876"/>
    <lineage>
        <taxon>Eukaryota</taxon>
        <taxon>Metazoa</taxon>
        <taxon>Ecdysozoa</taxon>
        <taxon>Arthropoda</taxon>
        <taxon>Chelicerata</taxon>
        <taxon>Arachnida</taxon>
        <taxon>Scorpiones</taxon>
        <taxon>Buthida</taxon>
        <taxon>Buthoidea</taxon>
        <taxon>Buthidae</taxon>
        <taxon>Centruroides</taxon>
    </lineage>
</organism>
<name>SCXD_CENLI</name>
<feature type="chain" id="PRO_0000439882" description="Beta-toxin Cl13" evidence="3">
    <location>
        <begin position="1"/>
        <end position="66"/>
    </location>
</feature>
<feature type="domain" description="LCN-type CS-alpha/beta" evidence="2">
    <location>
        <begin position="1"/>
        <end position="66"/>
    </location>
</feature>
<feature type="modified residue" description="Lysine amide" evidence="4">
    <location>
        <position position="66"/>
    </location>
</feature>
<feature type="disulfide bond" evidence="4 10">
    <location>
        <begin position="12"/>
        <end position="65"/>
    </location>
</feature>
<feature type="disulfide bond" evidence="4 10">
    <location>
        <begin position="16"/>
        <end position="41"/>
    </location>
</feature>
<feature type="disulfide bond" evidence="4 10">
    <location>
        <begin position="25"/>
        <end position="46"/>
    </location>
</feature>
<feature type="disulfide bond" evidence="4 10">
    <location>
        <begin position="29"/>
        <end position="48"/>
    </location>
</feature>
<feature type="turn" evidence="11">
    <location>
        <begin position="8"/>
        <end position="10"/>
    </location>
</feature>
<feature type="strand" evidence="11">
    <location>
        <begin position="17"/>
        <end position="19"/>
    </location>
</feature>
<feature type="helix" evidence="11">
    <location>
        <begin position="23"/>
        <end position="32"/>
    </location>
</feature>
<feature type="strand" evidence="11">
    <location>
        <begin position="38"/>
        <end position="42"/>
    </location>
</feature>
<feature type="strand" evidence="11">
    <location>
        <begin position="45"/>
        <end position="50"/>
    </location>
</feature>